<sequence length="322" mass="37759">MNFVNNLFTLKKISIKNISFFRSIIRIETFNNSFCDSLGNFIKRVIFLTTNSYKIIYLKIYKIKSEFYDLPGIIENTQTILKNLDNIIIKINNDNVANLIIKKKGPCIITAKDIFSDKNITIFNPNKIIANVSNNIVFYCIMKCVNSLFKNYTDEFFQFKIFKENIIFLNNFKSPIISLNYYINKKIFNKKLKKLFFDIETNGSIKPVDCFKNCIFYIKKYFDLIFSFIGFKKYKKINVEKKNNLNLKINSVYLNSINNLKLSIRSLNCLKNNNIFLIGDLIKISKNNLINIPNLGKKSYNEILNSLKNFGLNLNSKIEYDL</sequence>
<gene>
    <name type="primary">rpoA</name>
    <name type="ordered locus">CRP_135</name>
</gene>
<name>RPOA_CARRP</name>
<keyword id="KW-0240">DNA-directed RNA polymerase</keyword>
<keyword id="KW-0548">Nucleotidyltransferase</keyword>
<keyword id="KW-0804">Transcription</keyword>
<keyword id="KW-0808">Transferase</keyword>
<evidence type="ECO:0000250" key="1"/>
<evidence type="ECO:0000305" key="2"/>
<feature type="chain" id="PRO_0000296793" description="DNA-directed RNA polymerase subunit alpha">
    <location>
        <begin position="1"/>
        <end position="322"/>
    </location>
</feature>
<feature type="region of interest" description="Alpha N-terminal domain (alpha-NTD)" evidence="1">
    <location>
        <begin position="1"/>
        <end position="229"/>
    </location>
</feature>
<feature type="region of interest" description="Alpha C-terminal domain (alpha-CTD)" evidence="1">
    <location>
        <begin position="244"/>
        <end position="322"/>
    </location>
</feature>
<dbReference type="EC" id="2.7.7.6"/>
<dbReference type="EMBL" id="AP009180">
    <property type="protein sequence ID" value="BAF35166.1"/>
    <property type="molecule type" value="Genomic_DNA"/>
</dbReference>
<dbReference type="RefSeq" id="WP_011672358.1">
    <property type="nucleotide sequence ID" value="NC_008512.1"/>
</dbReference>
<dbReference type="SMR" id="Q05FK5"/>
<dbReference type="STRING" id="387662.CRP_135"/>
<dbReference type="KEGG" id="crp:CRP_135"/>
<dbReference type="HOGENOM" id="CLU_053084_0_0_6"/>
<dbReference type="OrthoDB" id="9805706at2"/>
<dbReference type="Proteomes" id="UP000000777">
    <property type="component" value="Chromosome"/>
</dbReference>
<dbReference type="GO" id="GO:0005737">
    <property type="term" value="C:cytoplasm"/>
    <property type="evidence" value="ECO:0007669"/>
    <property type="project" value="UniProtKB-ARBA"/>
</dbReference>
<dbReference type="GO" id="GO:0000428">
    <property type="term" value="C:DNA-directed RNA polymerase complex"/>
    <property type="evidence" value="ECO:0007669"/>
    <property type="project" value="UniProtKB-KW"/>
</dbReference>
<dbReference type="GO" id="GO:0003677">
    <property type="term" value="F:DNA binding"/>
    <property type="evidence" value="ECO:0007669"/>
    <property type="project" value="InterPro"/>
</dbReference>
<dbReference type="GO" id="GO:0003899">
    <property type="term" value="F:DNA-directed RNA polymerase activity"/>
    <property type="evidence" value="ECO:0007669"/>
    <property type="project" value="UniProtKB-EC"/>
</dbReference>
<dbReference type="GO" id="GO:0046983">
    <property type="term" value="F:protein dimerization activity"/>
    <property type="evidence" value="ECO:0007669"/>
    <property type="project" value="InterPro"/>
</dbReference>
<dbReference type="GO" id="GO:0006351">
    <property type="term" value="P:DNA-templated transcription"/>
    <property type="evidence" value="ECO:0007669"/>
    <property type="project" value="InterPro"/>
</dbReference>
<dbReference type="Gene3D" id="1.10.150.20">
    <property type="entry name" value="5' to 3' exonuclease, C-terminal subdomain"/>
    <property type="match status" value="1"/>
</dbReference>
<dbReference type="Gene3D" id="2.170.120.12">
    <property type="entry name" value="DNA-directed RNA polymerase, insert domain"/>
    <property type="match status" value="1"/>
</dbReference>
<dbReference type="Gene3D" id="3.30.1360.10">
    <property type="entry name" value="RNA polymerase, RBP11-like subunit"/>
    <property type="match status" value="1"/>
</dbReference>
<dbReference type="InterPro" id="IPR011262">
    <property type="entry name" value="DNA-dir_RNA_pol_insert"/>
</dbReference>
<dbReference type="InterPro" id="IPR011263">
    <property type="entry name" value="DNA-dir_RNA_pol_RpoA/D/Rpb3"/>
</dbReference>
<dbReference type="InterPro" id="IPR036603">
    <property type="entry name" value="RBP11-like"/>
</dbReference>
<dbReference type="InterPro" id="IPR011260">
    <property type="entry name" value="RNAP_asu_C"/>
</dbReference>
<dbReference type="InterPro" id="IPR036643">
    <property type="entry name" value="RNApol_insert_sf"/>
</dbReference>
<dbReference type="Pfam" id="PF01000">
    <property type="entry name" value="RNA_pol_A_bac"/>
    <property type="match status" value="1"/>
</dbReference>
<dbReference type="Pfam" id="PF03118">
    <property type="entry name" value="RNA_pol_A_CTD"/>
    <property type="match status" value="1"/>
</dbReference>
<dbReference type="Pfam" id="PF01193">
    <property type="entry name" value="RNA_pol_L"/>
    <property type="match status" value="1"/>
</dbReference>
<dbReference type="SUPFAM" id="SSF47789">
    <property type="entry name" value="C-terminal domain of RNA polymerase alpha subunit"/>
    <property type="match status" value="1"/>
</dbReference>
<dbReference type="SUPFAM" id="SSF56553">
    <property type="entry name" value="Insert subdomain of RNA polymerase alpha subunit"/>
    <property type="match status" value="1"/>
</dbReference>
<dbReference type="SUPFAM" id="SSF55257">
    <property type="entry name" value="RBP11-like subunits of RNA polymerase"/>
    <property type="match status" value="1"/>
</dbReference>
<accession>Q05FK5</accession>
<organism>
    <name type="scientific">Carsonella ruddii (strain PV)</name>
    <dbReference type="NCBI Taxonomy" id="387662"/>
    <lineage>
        <taxon>Bacteria</taxon>
        <taxon>Pseudomonadati</taxon>
        <taxon>Pseudomonadota</taxon>
        <taxon>Gammaproteobacteria</taxon>
        <taxon>Oceanospirillales</taxon>
        <taxon>Halomonadaceae</taxon>
        <taxon>Zymobacter group</taxon>
        <taxon>Candidatus Carsonella</taxon>
    </lineage>
</organism>
<comment type="function">
    <text evidence="1">DNA-dependent RNA polymerase catalyzes the transcription of DNA into RNA using the four ribonucleoside triphosphates as substrates.</text>
</comment>
<comment type="catalytic activity">
    <reaction>
        <text>RNA(n) + a ribonucleoside 5'-triphosphate = RNA(n+1) + diphosphate</text>
        <dbReference type="Rhea" id="RHEA:21248"/>
        <dbReference type="Rhea" id="RHEA-COMP:14527"/>
        <dbReference type="Rhea" id="RHEA-COMP:17342"/>
        <dbReference type="ChEBI" id="CHEBI:33019"/>
        <dbReference type="ChEBI" id="CHEBI:61557"/>
        <dbReference type="ChEBI" id="CHEBI:140395"/>
        <dbReference type="EC" id="2.7.7.6"/>
    </reaction>
</comment>
<comment type="subunit">
    <text evidence="1">Homodimer. The RNAP catalytic core consists of 2 alpha, 1 beta, 1 beta' and 1 omega subunit. When a sigma factor is associated with the core the holoenzyme is formed, which can initiate transcription (By similarity).</text>
</comment>
<comment type="domain">
    <text evidence="1">The N-terminal domain is essential for RNAP assembly and basal transcription, whereas the C-terminal domain is involved in interaction with transcriptional regulators and with upstream promoter elements.</text>
</comment>
<comment type="similarity">
    <text evidence="2">Belongs to the RNA polymerase alpha chain family.</text>
</comment>
<reference key="1">
    <citation type="journal article" date="2006" name="Science">
        <title>The 160-kilobase genome of the bacterial endosymbiont Carsonella.</title>
        <authorList>
            <person name="Nakabachi A."/>
            <person name="Yamashita A."/>
            <person name="Toh H."/>
            <person name="Ishikawa H."/>
            <person name="Dunbar H.E."/>
            <person name="Moran N.A."/>
            <person name="Hattori M."/>
        </authorList>
    </citation>
    <scope>NUCLEOTIDE SEQUENCE [LARGE SCALE GENOMIC DNA]</scope>
    <source>
        <strain>PV</strain>
    </source>
</reference>
<proteinExistence type="inferred from homology"/>
<protein>
    <recommendedName>
        <fullName>DNA-directed RNA polymerase subunit alpha</fullName>
        <shortName>RNAP subunit alpha</shortName>
        <ecNumber>2.7.7.6</ecNumber>
    </recommendedName>
    <alternativeName>
        <fullName>RNA polymerase subunit alpha</fullName>
    </alternativeName>
    <alternativeName>
        <fullName>Transcriptase subunit alpha</fullName>
    </alternativeName>
</protein>